<gene>
    <name type="ordered locus">MJ0353</name>
</gene>
<sequence>MMRYSSNKIYFIVYLGGKPVSFGVAKDVDEFERRRENIECLSDKIRVVKVGKKLFKRLRRQILEGEKKDFGMLKVNRRDLNVQV</sequence>
<protein>
    <recommendedName>
        <fullName>Uncharacterized protein MJ0353</fullName>
    </recommendedName>
</protein>
<reference key="1">
    <citation type="journal article" date="1996" name="Science">
        <title>Complete genome sequence of the methanogenic archaeon, Methanococcus jannaschii.</title>
        <authorList>
            <person name="Bult C.J."/>
            <person name="White O."/>
            <person name="Olsen G.J."/>
            <person name="Zhou L."/>
            <person name="Fleischmann R.D."/>
            <person name="Sutton G.G."/>
            <person name="Blake J.A."/>
            <person name="FitzGerald L.M."/>
            <person name="Clayton R.A."/>
            <person name="Gocayne J.D."/>
            <person name="Kerlavage A.R."/>
            <person name="Dougherty B.A."/>
            <person name="Tomb J.-F."/>
            <person name="Adams M.D."/>
            <person name="Reich C.I."/>
            <person name="Overbeek R."/>
            <person name="Kirkness E.F."/>
            <person name="Weinstock K.G."/>
            <person name="Merrick J.M."/>
            <person name="Glodek A."/>
            <person name="Scott J.L."/>
            <person name="Geoghagen N.S.M."/>
            <person name="Weidman J.F."/>
            <person name="Fuhrmann J.L."/>
            <person name="Nguyen D."/>
            <person name="Utterback T.R."/>
            <person name="Kelley J.M."/>
            <person name="Peterson J.D."/>
            <person name="Sadow P.W."/>
            <person name="Hanna M.C."/>
            <person name="Cotton M.D."/>
            <person name="Roberts K.M."/>
            <person name="Hurst M.A."/>
            <person name="Kaine B.P."/>
            <person name="Borodovsky M."/>
            <person name="Klenk H.-P."/>
            <person name="Fraser C.M."/>
            <person name="Smith H.O."/>
            <person name="Woese C.R."/>
            <person name="Venter J.C."/>
        </authorList>
    </citation>
    <scope>NUCLEOTIDE SEQUENCE [LARGE SCALE GENOMIC DNA]</scope>
    <source>
        <strain>ATCC 43067 / DSM 2661 / JAL-1 / JCM 10045 / NBRC 100440</strain>
    </source>
</reference>
<dbReference type="EMBL" id="L77117">
    <property type="protein sequence ID" value="AAB98342.1"/>
    <property type="molecule type" value="Genomic_DNA"/>
</dbReference>
<dbReference type="PIR" id="A64344">
    <property type="entry name" value="A64344"/>
</dbReference>
<dbReference type="RefSeq" id="WP_010869852.1">
    <property type="nucleotide sequence ID" value="NC_000909.1"/>
</dbReference>
<dbReference type="SMR" id="O06918"/>
<dbReference type="STRING" id="243232.MJ_0353"/>
<dbReference type="PaxDb" id="243232-MJ_0353"/>
<dbReference type="EnsemblBacteria" id="AAB98342">
    <property type="protein sequence ID" value="AAB98342"/>
    <property type="gene ID" value="MJ_0353"/>
</dbReference>
<dbReference type="GeneID" id="1451210"/>
<dbReference type="KEGG" id="mja:MJ_0353"/>
<dbReference type="eggNOG" id="arCOG08302">
    <property type="taxonomic scope" value="Archaea"/>
</dbReference>
<dbReference type="HOGENOM" id="CLU_190396_0_0_2"/>
<dbReference type="InParanoid" id="O06918"/>
<dbReference type="OrthoDB" id="386127at2157"/>
<dbReference type="Proteomes" id="UP000000805">
    <property type="component" value="Chromosome"/>
</dbReference>
<name>Y353_METJA</name>
<organism>
    <name type="scientific">Methanocaldococcus jannaschii (strain ATCC 43067 / DSM 2661 / JAL-1 / JCM 10045 / NBRC 100440)</name>
    <name type="common">Methanococcus jannaschii</name>
    <dbReference type="NCBI Taxonomy" id="243232"/>
    <lineage>
        <taxon>Archaea</taxon>
        <taxon>Methanobacteriati</taxon>
        <taxon>Methanobacteriota</taxon>
        <taxon>Methanomada group</taxon>
        <taxon>Methanococci</taxon>
        <taxon>Methanococcales</taxon>
        <taxon>Methanocaldococcaceae</taxon>
        <taxon>Methanocaldococcus</taxon>
    </lineage>
</organism>
<feature type="chain" id="PRO_0000106824" description="Uncharacterized protein MJ0353">
    <location>
        <begin position="1"/>
        <end position="84"/>
    </location>
</feature>
<keyword id="KW-1185">Reference proteome</keyword>
<accession>O06918</accession>
<proteinExistence type="predicted"/>